<feature type="chain" id="PRO_0000207902" description="Protein PsbN">
    <location>
        <begin position="1"/>
        <end position="43"/>
    </location>
</feature>
<feature type="transmembrane region" description="Helical" evidence="1">
    <location>
        <begin position="5"/>
        <end position="25"/>
    </location>
</feature>
<comment type="function">
    <text evidence="1">May play a role in photosystem I and II biogenesis.</text>
</comment>
<comment type="subcellular location">
    <subcellularLocation>
        <location evidence="1">Plastid</location>
        <location evidence="1">Chloroplast thylakoid membrane</location>
        <topology evidence="1">Single-pass membrane protein</topology>
    </subcellularLocation>
</comment>
<comment type="similarity">
    <text evidence="1">Belongs to the PsbN family.</text>
</comment>
<comment type="caution">
    <text evidence="1">Originally thought to be a component of PSII; based on experiments in Synechocystis, N.tabacum and barley, and its absence from PSII in T.elongatus and T.vulcanus, this is probably not true.</text>
</comment>
<dbReference type="EMBL" id="AY673996">
    <property type="protein sequence ID" value="AAT79649.1"/>
    <property type="molecule type" value="Genomic_DNA"/>
</dbReference>
<dbReference type="RefSeq" id="YP_063574.1">
    <property type="nucleotide sequence ID" value="NC_006137.1"/>
</dbReference>
<dbReference type="SMR" id="Q6B8Y6"/>
<dbReference type="GeneID" id="2944112"/>
<dbReference type="GO" id="GO:0009535">
    <property type="term" value="C:chloroplast thylakoid membrane"/>
    <property type="evidence" value="ECO:0007669"/>
    <property type="project" value="UniProtKB-SubCell"/>
</dbReference>
<dbReference type="GO" id="GO:0015979">
    <property type="term" value="P:photosynthesis"/>
    <property type="evidence" value="ECO:0007669"/>
    <property type="project" value="InterPro"/>
</dbReference>
<dbReference type="HAMAP" id="MF_00293">
    <property type="entry name" value="PSII_PsbN"/>
    <property type="match status" value="1"/>
</dbReference>
<dbReference type="InterPro" id="IPR003398">
    <property type="entry name" value="PSII_PsbN"/>
</dbReference>
<dbReference type="PANTHER" id="PTHR35326">
    <property type="entry name" value="PROTEIN PSBN"/>
    <property type="match status" value="1"/>
</dbReference>
<dbReference type="PANTHER" id="PTHR35326:SF3">
    <property type="entry name" value="PROTEIN PSBN"/>
    <property type="match status" value="1"/>
</dbReference>
<dbReference type="Pfam" id="PF02468">
    <property type="entry name" value="PsbN"/>
    <property type="match status" value="1"/>
</dbReference>
<proteinExistence type="inferred from homology"/>
<gene>
    <name evidence="1" type="primary">psbN</name>
    <name type="ordered locus">Grc000068</name>
</gene>
<keyword id="KW-0150">Chloroplast</keyword>
<keyword id="KW-0472">Membrane</keyword>
<keyword id="KW-0934">Plastid</keyword>
<keyword id="KW-0793">Thylakoid</keyword>
<keyword id="KW-0812">Transmembrane</keyword>
<keyword id="KW-1133">Transmembrane helix</keyword>
<name>PSBN_GRATL</name>
<organism>
    <name type="scientific">Gracilaria tenuistipitata var. liui</name>
    <name type="common">Red alga</name>
    <dbReference type="NCBI Taxonomy" id="285951"/>
    <lineage>
        <taxon>Eukaryota</taxon>
        <taxon>Rhodophyta</taxon>
        <taxon>Florideophyceae</taxon>
        <taxon>Rhodymeniophycidae</taxon>
        <taxon>Gracilariales</taxon>
        <taxon>Gracilariaceae</taxon>
        <taxon>Gracilaria</taxon>
        <taxon>Gracilaria tenuistipitata</taxon>
    </lineage>
</organism>
<evidence type="ECO:0000255" key="1">
    <source>
        <dbReference type="HAMAP-Rule" id="MF_00293"/>
    </source>
</evidence>
<geneLocation type="chloroplast"/>
<protein>
    <recommendedName>
        <fullName evidence="1">Protein PsbN</fullName>
    </recommendedName>
</protein>
<accession>Q6B8Y6</accession>
<reference key="1">
    <citation type="journal article" date="2004" name="J. Mol. Evol.">
        <title>Comparative analysis of the complete plastid genome sequence of the red alga Gracilaria tenuistipitata var. liui provides insights into the evolution of rhodoplasts and their relationship to other plastids.</title>
        <authorList>
            <person name="Hagopian J.C."/>
            <person name="Reis M."/>
            <person name="Kitajima J.P."/>
            <person name="Bhattacharya D."/>
            <person name="de Oliveira M.C."/>
        </authorList>
    </citation>
    <scope>NUCLEOTIDE SEQUENCE [LARGE SCALE GENOMIC DNA]</scope>
</reference>
<sequence length="43" mass="4918">MQTATVLSIFISSLLLGITIYSIYISFGPISRELRDPFEEHEE</sequence>